<dbReference type="EMBL" id="L05394">
    <property type="status" value="NOT_ANNOTATED_CDS"/>
    <property type="molecule type" value="Genomic_DNA"/>
</dbReference>
<dbReference type="EMBL" id="AC004044">
    <property type="protein sequence ID" value="AAD15340.1"/>
    <property type="molecule type" value="Genomic_DNA"/>
</dbReference>
<dbReference type="EMBL" id="AL161495">
    <property type="protein sequence ID" value="CAB77774.1"/>
    <property type="molecule type" value="Genomic_DNA"/>
</dbReference>
<dbReference type="EMBL" id="CP002687">
    <property type="protein sequence ID" value="AEE82244.1"/>
    <property type="molecule type" value="Genomic_DNA"/>
</dbReference>
<dbReference type="EMBL" id="CP002687">
    <property type="protein sequence ID" value="AEE82245.1"/>
    <property type="molecule type" value="Genomic_DNA"/>
</dbReference>
<dbReference type="EMBL" id="CP002687">
    <property type="protein sequence ID" value="AEE82246.1"/>
    <property type="molecule type" value="Genomic_DNA"/>
</dbReference>
<dbReference type="EMBL" id="CP002687">
    <property type="protein sequence ID" value="AEE82247.1"/>
    <property type="molecule type" value="Genomic_DNA"/>
</dbReference>
<dbReference type="EMBL" id="AK316842">
    <property type="protein sequence ID" value="BAH19554.1"/>
    <property type="molecule type" value="mRNA"/>
</dbReference>
<dbReference type="EMBL" id="AY087759">
    <property type="protein sequence ID" value="AAM65295.1"/>
    <property type="molecule type" value="mRNA"/>
</dbReference>
<dbReference type="RefSeq" id="NP_001031585.1">
    <molecule id="Q3E7T8-2"/>
    <property type="nucleotide sequence ID" value="NM_001036508.2"/>
</dbReference>
<dbReference type="RefSeq" id="NP_001118922.1">
    <molecule id="Q3E7T8-1"/>
    <property type="nucleotide sequence ID" value="NM_001125450.2"/>
</dbReference>
<dbReference type="RefSeq" id="NP_001118936.1">
    <molecule id="Q3E7T8-2"/>
    <property type="nucleotide sequence ID" value="NM_001125464.2"/>
</dbReference>
<dbReference type="RefSeq" id="NP_001328998.1">
    <molecule id="Q3E7T8-1"/>
    <property type="nucleotide sequence ID" value="NM_001340547.1"/>
</dbReference>
<dbReference type="RefSeq" id="NP_567247.2">
    <molecule id="Q3E7T8-2"/>
    <property type="nucleotide sequence ID" value="NM_116523.3"/>
</dbReference>
<dbReference type="RefSeq" id="NP_567286.1">
    <molecule id="Q3E7T8-2"/>
    <property type="nucleotide sequence ID" value="NM_116744.4"/>
</dbReference>
<dbReference type="RefSeq" id="NP_849291.1">
    <molecule id="Q3E7T8-2"/>
    <property type="nucleotide sequence ID" value="NM_178960.2"/>
</dbReference>
<dbReference type="RefSeq" id="NP_849292.1">
    <molecule id="Q3E7T8-1"/>
    <property type="nucleotide sequence ID" value="NM_178961.1"/>
</dbReference>
<dbReference type="RefSeq" id="NP_974516.4">
    <molecule id="Q3E7T8-1"/>
    <property type="nucleotide sequence ID" value="NM_202787.4"/>
</dbReference>
<dbReference type="SMR" id="Q3E7T8"/>
<dbReference type="BioGRID" id="11158">
    <property type="interactions" value="1"/>
</dbReference>
<dbReference type="BioGRID" id="11191">
    <property type="interactions" value="13"/>
</dbReference>
<dbReference type="BioGRID" id="13437">
    <property type="interactions" value="3"/>
</dbReference>
<dbReference type="FunCoup" id="Q3E7T8">
    <property type="interactions" value="1023"/>
</dbReference>
<dbReference type="STRING" id="3702.Q3E7T8"/>
<dbReference type="PaxDb" id="3702-AT4G02890.3"/>
<dbReference type="EnsemblPlants" id="AT4G02890.1">
    <molecule id="Q3E7T8-2"/>
    <property type="protein sequence ID" value="AT4G02890.1"/>
    <property type="gene ID" value="AT4G02890"/>
</dbReference>
<dbReference type="EnsemblPlants" id="AT4G02890.2">
    <molecule id="Q3E7T8-2"/>
    <property type="protein sequence ID" value="AT4G02890.2"/>
    <property type="gene ID" value="AT4G02890"/>
</dbReference>
<dbReference type="EnsemblPlants" id="AT4G02890.3">
    <property type="protein sequence ID" value="AT4G02890.3"/>
    <property type="gene ID" value="AT4G02890"/>
</dbReference>
<dbReference type="EnsemblPlants" id="AT4G02890.4">
    <property type="protein sequence ID" value="AT4G02890.4"/>
    <property type="gene ID" value="AT4G02890"/>
</dbReference>
<dbReference type="EnsemblPlants" id="AT4G05050.1">
    <molecule id="Q3E7T8-2"/>
    <property type="protein sequence ID" value="AT4G05050.1"/>
    <property type="gene ID" value="AT4G05050"/>
</dbReference>
<dbReference type="EnsemblPlants" id="AT4G05050.2">
    <molecule id="Q3E7T8-2"/>
    <property type="protein sequence ID" value="AT4G05050.2"/>
    <property type="gene ID" value="AT4G05050"/>
</dbReference>
<dbReference type="EnsemblPlants" id="AT4G05050.3">
    <molecule id="Q3E7T8-2"/>
    <property type="protein sequence ID" value="AT4G05050.3"/>
    <property type="gene ID" value="AT4G05050"/>
</dbReference>
<dbReference type="EnsemblPlants" id="AT4G05320.5">
    <property type="protein sequence ID" value="AT4G05320.5"/>
    <property type="gene ID" value="AT4G05320"/>
</dbReference>
<dbReference type="EnsemblPlants" id="AT4G05320.8">
    <property type="protein sequence ID" value="AT4G05320.8"/>
    <property type="gene ID" value="AT4G05320"/>
</dbReference>
<dbReference type="GeneID" id="828148"/>
<dbReference type="Gramene" id="AT4G02890.1">
    <molecule id="Q3E7T8-2"/>
    <property type="protein sequence ID" value="AT4G02890.1"/>
    <property type="gene ID" value="AT4G02890"/>
</dbReference>
<dbReference type="Gramene" id="AT4G02890.2">
    <molecule id="Q3E7T8-2"/>
    <property type="protein sequence ID" value="AT4G02890.2"/>
    <property type="gene ID" value="AT4G02890"/>
</dbReference>
<dbReference type="Gramene" id="AT4G02890.3">
    <property type="protein sequence ID" value="AT4G02890.3"/>
    <property type="gene ID" value="AT4G02890"/>
</dbReference>
<dbReference type="Gramene" id="AT4G02890.4">
    <property type="protein sequence ID" value="AT4G02890.4"/>
    <property type="gene ID" value="AT4G02890"/>
</dbReference>
<dbReference type="Gramene" id="AT4G05050.1">
    <molecule id="Q3E7T8-2"/>
    <property type="protein sequence ID" value="AT4G05050.1"/>
    <property type="gene ID" value="AT4G05050"/>
</dbReference>
<dbReference type="Gramene" id="AT4G05050.2">
    <molecule id="Q3E7T8-2"/>
    <property type="protein sequence ID" value="AT4G05050.2"/>
    <property type="gene ID" value="AT4G05050"/>
</dbReference>
<dbReference type="Gramene" id="AT4G05050.3">
    <molecule id="Q3E7T8-2"/>
    <property type="protein sequence ID" value="AT4G05050.3"/>
    <property type="gene ID" value="AT4G05050"/>
</dbReference>
<dbReference type="Gramene" id="AT4G05320.5">
    <property type="protein sequence ID" value="AT4G05320.5"/>
    <property type="gene ID" value="AT4G05320"/>
</dbReference>
<dbReference type="Gramene" id="AT4G05320.8">
    <property type="protein sequence ID" value="AT4G05320.8"/>
    <property type="gene ID" value="AT4G05320"/>
</dbReference>
<dbReference type="KEGG" id="ath:AT4G02890"/>
<dbReference type="KEGG" id="ath:AT4G05050"/>
<dbReference type="KEGG" id="ath:AT4G05320"/>
<dbReference type="Araport" id="AT4G02890"/>
<dbReference type="TAIR" id="AT4G02890">
    <property type="gene designation" value="UBQ14"/>
</dbReference>
<dbReference type="HOGENOM" id="CLU_010412_7_0_1"/>
<dbReference type="InParanoid" id="Q3E7T8"/>
<dbReference type="OrthoDB" id="1886586at2759"/>
<dbReference type="PRO" id="PR:Q3E7T8"/>
<dbReference type="Proteomes" id="UP000006548">
    <property type="component" value="Chromosome 4"/>
</dbReference>
<dbReference type="ExpressionAtlas" id="Q3E7T8">
    <property type="expression patterns" value="baseline and differential"/>
</dbReference>
<dbReference type="GO" id="GO:0005829">
    <property type="term" value="C:cytosol"/>
    <property type="evidence" value="ECO:0007005"/>
    <property type="project" value="TAIR"/>
</dbReference>
<dbReference type="GO" id="GO:0005634">
    <property type="term" value="C:nucleus"/>
    <property type="evidence" value="ECO:0007669"/>
    <property type="project" value="UniProtKB-SubCell"/>
</dbReference>
<dbReference type="GO" id="GO:0000325">
    <property type="term" value="C:plant-type vacuole"/>
    <property type="evidence" value="ECO:0007005"/>
    <property type="project" value="TAIR"/>
</dbReference>
<dbReference type="GO" id="GO:0003729">
    <property type="term" value="F:mRNA binding"/>
    <property type="evidence" value="ECO:0000314"/>
    <property type="project" value="TAIR"/>
</dbReference>
<dbReference type="GO" id="GO:0006511">
    <property type="term" value="P:ubiquitin-dependent protein catabolic process"/>
    <property type="evidence" value="ECO:0000250"/>
    <property type="project" value="TAIR"/>
</dbReference>
<dbReference type="CDD" id="cd01803">
    <property type="entry name" value="Ubl_ubiquitin"/>
    <property type="match status" value="4"/>
</dbReference>
<dbReference type="FunFam" id="3.10.20.90:FF:000016">
    <property type="entry name" value="Polyubiquitin 3"/>
    <property type="match status" value="4"/>
</dbReference>
<dbReference type="Gene3D" id="3.10.20.90">
    <property type="entry name" value="Phosphatidylinositol 3-kinase Catalytic Subunit, Chain A, domain 1"/>
    <property type="match status" value="4"/>
</dbReference>
<dbReference type="InterPro" id="IPR000626">
    <property type="entry name" value="Ubiquitin-like_dom"/>
</dbReference>
<dbReference type="InterPro" id="IPR029071">
    <property type="entry name" value="Ubiquitin-like_domsf"/>
</dbReference>
<dbReference type="InterPro" id="IPR019954">
    <property type="entry name" value="Ubiquitin_CS"/>
</dbReference>
<dbReference type="InterPro" id="IPR019956">
    <property type="entry name" value="Ubiquitin_dom"/>
</dbReference>
<dbReference type="InterPro" id="IPR050158">
    <property type="entry name" value="Ubiquitin_ubiquitin-like"/>
</dbReference>
<dbReference type="PANTHER" id="PTHR10666">
    <property type="entry name" value="UBIQUITIN"/>
    <property type="match status" value="1"/>
</dbReference>
<dbReference type="Pfam" id="PF00240">
    <property type="entry name" value="ubiquitin"/>
    <property type="match status" value="4"/>
</dbReference>
<dbReference type="PRINTS" id="PR00348">
    <property type="entry name" value="UBIQUITIN"/>
</dbReference>
<dbReference type="SMART" id="SM00213">
    <property type="entry name" value="UBQ"/>
    <property type="match status" value="4"/>
</dbReference>
<dbReference type="SUPFAM" id="SSF54236">
    <property type="entry name" value="Ubiquitin-like"/>
    <property type="match status" value="4"/>
</dbReference>
<dbReference type="PROSITE" id="PS00299">
    <property type="entry name" value="UBIQUITIN_1"/>
    <property type="match status" value="4"/>
</dbReference>
<dbReference type="PROSITE" id="PS50053">
    <property type="entry name" value="UBIQUITIN_2"/>
    <property type="match status" value="4"/>
</dbReference>
<accession>Q3E7T8</accession>
<accession>B9DFN7</accession>
<accession>O80715</accession>
<accession>P59263</accession>
<accession>Q38875</accession>
<accession>Q9LDJ2</accession>
<accession>Q9LYW1</accession>
<accession>Q9M0W3</accession>
<accession>Q9M1P9</accession>
<accession>Q9S7X3</accession>
<reference key="1">
    <citation type="journal article" date="1995" name="Genetics">
        <title>Structure and evolution of genes encoding polyubiquitin and ubiquitin-like proteins in Arabidopsis thaliana ecotype Columbia.</title>
        <authorList>
            <person name="Callis J."/>
            <person name="Carpenter T."/>
            <person name="Sun C.W."/>
            <person name="Vierstra R.D."/>
        </authorList>
    </citation>
    <scope>NUCLEOTIDE SEQUENCE [GENOMIC DNA]</scope>
    <source>
        <strain>cv. Columbia</strain>
    </source>
</reference>
<reference key="2">
    <citation type="journal article" date="1999" name="Nature">
        <title>Sequence and analysis of chromosome 4 of the plant Arabidopsis thaliana.</title>
        <authorList>
            <person name="Mayer K.F.X."/>
            <person name="Schueller C."/>
            <person name="Wambutt R."/>
            <person name="Murphy G."/>
            <person name="Volckaert G."/>
            <person name="Pohl T."/>
            <person name="Duesterhoeft A."/>
            <person name="Stiekema W."/>
            <person name="Entian K.-D."/>
            <person name="Terryn N."/>
            <person name="Harris B."/>
            <person name="Ansorge W."/>
            <person name="Brandt P."/>
            <person name="Grivell L.A."/>
            <person name="Rieger M."/>
            <person name="Weichselgartner M."/>
            <person name="de Simone V."/>
            <person name="Obermaier B."/>
            <person name="Mache R."/>
            <person name="Mueller M."/>
            <person name="Kreis M."/>
            <person name="Delseny M."/>
            <person name="Puigdomenech P."/>
            <person name="Watson M."/>
            <person name="Schmidtheini T."/>
            <person name="Reichert B."/>
            <person name="Portetelle D."/>
            <person name="Perez-Alonso M."/>
            <person name="Boutry M."/>
            <person name="Bancroft I."/>
            <person name="Vos P."/>
            <person name="Hoheisel J."/>
            <person name="Zimmermann W."/>
            <person name="Wedler H."/>
            <person name="Ridley P."/>
            <person name="Langham S.-A."/>
            <person name="McCullagh B."/>
            <person name="Bilham L."/>
            <person name="Robben J."/>
            <person name="van der Schueren J."/>
            <person name="Grymonprez B."/>
            <person name="Chuang Y.-J."/>
            <person name="Vandenbussche F."/>
            <person name="Braeken M."/>
            <person name="Weltjens I."/>
            <person name="Voet M."/>
            <person name="Bastiaens I."/>
            <person name="Aert R."/>
            <person name="Defoor E."/>
            <person name="Weitzenegger T."/>
            <person name="Bothe G."/>
            <person name="Ramsperger U."/>
            <person name="Hilbert H."/>
            <person name="Braun M."/>
            <person name="Holzer E."/>
            <person name="Brandt A."/>
            <person name="Peters S."/>
            <person name="van Staveren M."/>
            <person name="Dirkse W."/>
            <person name="Mooijman P."/>
            <person name="Klein Lankhorst R."/>
            <person name="Rose M."/>
            <person name="Hauf J."/>
            <person name="Koetter P."/>
            <person name="Berneiser S."/>
            <person name="Hempel S."/>
            <person name="Feldpausch M."/>
            <person name="Lamberth S."/>
            <person name="Van den Daele H."/>
            <person name="De Keyser A."/>
            <person name="Buysshaert C."/>
            <person name="Gielen J."/>
            <person name="Villarroel R."/>
            <person name="De Clercq R."/>
            <person name="van Montagu M."/>
            <person name="Rogers J."/>
            <person name="Cronin A."/>
            <person name="Quail M.A."/>
            <person name="Bray-Allen S."/>
            <person name="Clark L."/>
            <person name="Doggett J."/>
            <person name="Hall S."/>
            <person name="Kay M."/>
            <person name="Lennard N."/>
            <person name="McLay K."/>
            <person name="Mayes R."/>
            <person name="Pettett A."/>
            <person name="Rajandream M.A."/>
            <person name="Lyne M."/>
            <person name="Benes V."/>
            <person name="Rechmann S."/>
            <person name="Borkova D."/>
            <person name="Bloecker H."/>
            <person name="Scharfe M."/>
            <person name="Grimm M."/>
            <person name="Loehnert T.-H."/>
            <person name="Dose S."/>
            <person name="de Haan M."/>
            <person name="Maarse A.C."/>
            <person name="Schaefer M."/>
            <person name="Mueller-Auer S."/>
            <person name="Gabel C."/>
            <person name="Fuchs M."/>
            <person name="Fartmann B."/>
            <person name="Granderath K."/>
            <person name="Dauner D."/>
            <person name="Herzl A."/>
            <person name="Neumann S."/>
            <person name="Argiriou A."/>
            <person name="Vitale D."/>
            <person name="Liguori R."/>
            <person name="Piravandi E."/>
            <person name="Massenet O."/>
            <person name="Quigley F."/>
            <person name="Clabauld G."/>
            <person name="Muendlein A."/>
            <person name="Felber R."/>
            <person name="Schnabl S."/>
            <person name="Hiller R."/>
            <person name="Schmidt W."/>
            <person name="Lecharny A."/>
            <person name="Aubourg S."/>
            <person name="Chefdor F."/>
            <person name="Cooke R."/>
            <person name="Berger C."/>
            <person name="Monfort A."/>
            <person name="Casacuberta E."/>
            <person name="Gibbons T."/>
            <person name="Weber N."/>
            <person name="Vandenbol M."/>
            <person name="Bargues M."/>
            <person name="Terol J."/>
            <person name="Torres A."/>
            <person name="Perez-Perez A."/>
            <person name="Purnelle B."/>
            <person name="Bent E."/>
            <person name="Johnson S."/>
            <person name="Tacon D."/>
            <person name="Jesse T."/>
            <person name="Heijnen L."/>
            <person name="Schwarz S."/>
            <person name="Scholler P."/>
            <person name="Heber S."/>
            <person name="Francs P."/>
            <person name="Bielke C."/>
            <person name="Frishman D."/>
            <person name="Haase D."/>
            <person name="Lemcke K."/>
            <person name="Mewes H.-W."/>
            <person name="Stocker S."/>
            <person name="Zaccaria P."/>
            <person name="Bevan M."/>
            <person name="Wilson R.K."/>
            <person name="de la Bastide M."/>
            <person name="Habermann K."/>
            <person name="Parnell L."/>
            <person name="Dedhia N."/>
            <person name="Gnoj L."/>
            <person name="Schutz K."/>
            <person name="Huang E."/>
            <person name="Spiegel L."/>
            <person name="Sekhon M."/>
            <person name="Murray J."/>
            <person name="Sheet P."/>
            <person name="Cordes M."/>
            <person name="Abu-Threideh J."/>
            <person name="Stoneking T."/>
            <person name="Kalicki J."/>
            <person name="Graves T."/>
            <person name="Harmon G."/>
            <person name="Edwards J."/>
            <person name="Latreille P."/>
            <person name="Courtney L."/>
            <person name="Cloud J."/>
            <person name="Abbott A."/>
            <person name="Scott K."/>
            <person name="Johnson D."/>
            <person name="Minx P."/>
            <person name="Bentley D."/>
            <person name="Fulton B."/>
            <person name="Miller N."/>
            <person name="Greco T."/>
            <person name="Kemp K."/>
            <person name="Kramer J."/>
            <person name="Fulton L."/>
            <person name="Mardis E."/>
            <person name="Dante M."/>
            <person name="Pepin K."/>
            <person name="Hillier L.W."/>
            <person name="Nelson J."/>
            <person name="Spieth J."/>
            <person name="Ryan E."/>
            <person name="Andrews S."/>
            <person name="Geisel C."/>
            <person name="Layman D."/>
            <person name="Du H."/>
            <person name="Ali J."/>
            <person name="Berghoff A."/>
            <person name="Jones K."/>
            <person name="Drone K."/>
            <person name="Cotton M."/>
            <person name="Joshu C."/>
            <person name="Antonoiu B."/>
            <person name="Zidanic M."/>
            <person name="Strong C."/>
            <person name="Sun H."/>
            <person name="Lamar B."/>
            <person name="Yordan C."/>
            <person name="Ma P."/>
            <person name="Zhong J."/>
            <person name="Preston R."/>
            <person name="Vil D."/>
            <person name="Shekher M."/>
            <person name="Matero A."/>
            <person name="Shah R."/>
            <person name="Swaby I.K."/>
            <person name="O'Shaughnessy A."/>
            <person name="Rodriguez M."/>
            <person name="Hoffman J."/>
            <person name="Till S."/>
            <person name="Granat S."/>
            <person name="Shohdy N."/>
            <person name="Hasegawa A."/>
            <person name="Hameed A."/>
            <person name="Lodhi M."/>
            <person name="Johnson A."/>
            <person name="Chen E."/>
            <person name="Marra M.A."/>
            <person name="Martienssen R."/>
            <person name="McCombie W.R."/>
        </authorList>
    </citation>
    <scope>NUCLEOTIDE SEQUENCE [LARGE SCALE GENOMIC DNA]</scope>
    <source>
        <strain>cv. Columbia</strain>
    </source>
</reference>
<reference key="3">
    <citation type="journal article" date="2017" name="Plant J.">
        <title>Araport11: a complete reannotation of the Arabidopsis thaliana reference genome.</title>
        <authorList>
            <person name="Cheng C.Y."/>
            <person name="Krishnakumar V."/>
            <person name="Chan A.P."/>
            <person name="Thibaud-Nissen F."/>
            <person name="Schobel S."/>
            <person name="Town C.D."/>
        </authorList>
    </citation>
    <scope>GENOME REANNOTATION</scope>
    <source>
        <strain>cv. Columbia</strain>
    </source>
</reference>
<reference key="4">
    <citation type="journal article" date="2009" name="DNA Res.">
        <title>Analysis of multiple occurrences of alternative splicing events in Arabidopsis thaliana using novel sequenced full-length cDNAs.</title>
        <authorList>
            <person name="Iida K."/>
            <person name="Fukami-Kobayashi K."/>
            <person name="Toyoda A."/>
            <person name="Sakaki Y."/>
            <person name="Kobayashi M."/>
            <person name="Seki M."/>
            <person name="Shinozaki K."/>
        </authorList>
    </citation>
    <scope>NUCLEOTIDE SEQUENCE [LARGE SCALE MRNA]</scope>
    <source>
        <strain>cv. Columbia</strain>
    </source>
</reference>
<reference key="5">
    <citation type="submission" date="2002-03" db="EMBL/GenBank/DDBJ databases">
        <title>Full-length cDNA from Arabidopsis thaliana.</title>
        <authorList>
            <person name="Brover V.V."/>
            <person name="Troukhan M.E."/>
            <person name="Alexandrov N.A."/>
            <person name="Lu Y.-P."/>
            <person name="Flavell R.B."/>
            <person name="Feldmann K.A."/>
        </authorList>
    </citation>
    <scope>NUCLEOTIDE SEQUENCE [LARGE SCALE MRNA]</scope>
</reference>
<keyword id="KW-0025">Alternative splicing</keyword>
<keyword id="KW-0963">Cytoplasm</keyword>
<keyword id="KW-1017">Isopeptide bond</keyword>
<keyword id="KW-0539">Nucleus</keyword>
<keyword id="KW-1185">Reference proteome</keyword>
<keyword id="KW-0677">Repeat</keyword>
<keyword id="KW-0833">Ubl conjugation pathway</keyword>
<sequence>MQIFVKTLTGKTITLEVESSDTIDNVKAKIQDKEGIPPDQQRLIFAGKQLEDGRTLADYNIQKESTLHLVLRLRGGMQIFVKTLTGKTITLEVESSDTIDNVKAKIQDKEGIPPDQQRLIFAGKQLEDGRTLADYNIQKESTLHLVLRLRGGMQIFVKTLTGKTITLEVESSDTIDNVKAKIQDKEGIPPDQQRLIFAGKQLEDGRTLADYNIQKESTLHLVLRLRGGMQIFVKTLTGKTITLEVESSDTIDNVKAKIQDKEGIPPDQQRLIFAGKQLEDGRTLADYNIQKESTLHLVLRLRGGF</sequence>
<gene>
    <name type="primary">UBQ14</name>
    <name type="ordered locus">At4g02890</name>
    <name type="ORF">T5J8.21</name>
</gene>
<evidence type="ECO:0000250" key="1"/>
<evidence type="ECO:0000255" key="2">
    <source>
        <dbReference type="PROSITE-ProRule" id="PRU00214"/>
    </source>
</evidence>
<evidence type="ECO:0000305" key="3"/>
<feature type="chain" id="PRO_0000396899" description="Ubiquitin">
    <location>
        <begin position="1"/>
        <end position="76"/>
    </location>
</feature>
<feature type="chain" id="PRO_0000396900" description="Ubiquitin">
    <location>
        <begin position="77"/>
        <end position="152"/>
    </location>
</feature>
<feature type="chain" id="PRO_0000396901" description="Ubiquitin">
    <location>
        <begin position="153"/>
        <end position="228"/>
    </location>
</feature>
<feature type="chain" id="PRO_0000396902" description="Ubiquitin">
    <location>
        <begin position="229"/>
        <end position="304"/>
    </location>
</feature>
<feature type="propeptide" id="PRO_0000396903" evidence="3">
    <location>
        <position position="305"/>
    </location>
</feature>
<feature type="domain" description="Ubiquitin-like 1" evidence="2">
    <location>
        <begin position="1"/>
        <end position="76"/>
    </location>
</feature>
<feature type="domain" description="Ubiquitin-like 2" evidence="2">
    <location>
        <begin position="77"/>
        <end position="152"/>
    </location>
</feature>
<feature type="domain" description="Ubiquitin-like 3" evidence="2">
    <location>
        <begin position="153"/>
        <end position="228"/>
    </location>
</feature>
<feature type="domain" description="Ubiquitin-like 4" evidence="2">
    <location>
        <begin position="229"/>
        <end position="304"/>
    </location>
</feature>
<feature type="cross-link" description="Glycyl lysine isopeptide (Gly-Lys) (interchain with K-? in acceptor proteins)" evidence="2">
    <location>
        <position position="76"/>
    </location>
</feature>
<feature type="splice variant" id="VSP_041601" description="In isoform 2." evidence="3">
    <location>
        <begin position="1"/>
        <end position="76"/>
    </location>
</feature>
<organism>
    <name type="scientific">Arabidopsis thaliana</name>
    <name type="common">Mouse-ear cress</name>
    <dbReference type="NCBI Taxonomy" id="3702"/>
    <lineage>
        <taxon>Eukaryota</taxon>
        <taxon>Viridiplantae</taxon>
        <taxon>Streptophyta</taxon>
        <taxon>Embryophyta</taxon>
        <taxon>Tracheophyta</taxon>
        <taxon>Spermatophyta</taxon>
        <taxon>Magnoliopsida</taxon>
        <taxon>eudicotyledons</taxon>
        <taxon>Gunneridae</taxon>
        <taxon>Pentapetalae</taxon>
        <taxon>rosids</taxon>
        <taxon>malvids</taxon>
        <taxon>Brassicales</taxon>
        <taxon>Brassicaceae</taxon>
        <taxon>Camelineae</taxon>
        <taxon>Arabidopsis</taxon>
    </lineage>
</organism>
<protein>
    <recommendedName>
        <fullName>Polyubiquitin 14</fullName>
    </recommendedName>
    <component>
        <recommendedName>
            <fullName>Ubiquitin</fullName>
        </recommendedName>
    </component>
</protein>
<proteinExistence type="evidence at transcript level"/>
<comment type="function">
    <text evidence="1">Ubiquitin exists either covalently attached to another protein, or free (unanchored). When covalently bound, it is conjugated to target proteins via an isopeptide bond either as a monomer (monoubiquitin), a polymer linked via different Lys residues of the ubiquitin (polyubiquitin chains) or a linear polymer linked via the initiator Met of the ubiquitin (linear polyubiquitin chains). Polyubiquitin chains, when attached to a target protein, have different functions depending on the Lys residue of the ubiquitin that is linked: Lys-11-linked is involved in ERAD (endoplasmic reticulum-associated degradation) and in cell-cycle regulation; Lys-29-linked is involved in lysosomal degradation; Lys-33-linked is involved in kinase modification; Lys-48-linked is involved in protein degradation via the proteasome; Lys-63-linked is involved in endocytosis, and DNA-damage responses. Linear polymer chains formed via attachment by the initiator Met lead to cell signaling. Ubiquitin is usually conjugated to Lys residues of target proteins, however, in rare cases, conjugation to Cys or Ser residues has been observed. When polyubiquitin is free (unanchored-polyubiquitin), it also has distinct roles, such as in activation of protein kinases, and in signaling (By similarity).</text>
</comment>
<comment type="subcellular location">
    <subcellularLocation>
        <location evidence="1">Cytoplasm</location>
    </subcellularLocation>
    <subcellularLocation>
        <location evidence="1">Nucleus</location>
    </subcellularLocation>
</comment>
<comment type="alternative products">
    <event type="alternative splicing"/>
    <isoform>
        <id>Q3E7T8-1</id>
        <name>1</name>
        <sequence type="displayed"/>
    </isoform>
    <isoform>
        <id>Q3E7T8-2</id>
        <name>2</name>
        <sequence type="described" ref="VSP_041601"/>
    </isoform>
</comment>
<comment type="miscellaneous">
    <text>Ubiquitin is encoded by 16 different genes. Ubiquitin is generally synthesized as a polyubiquitin precursor with tandem head to tail repeats. Often, there is one to three additional amino acids after the last repeat, removed in the mature protein. Alternatively, ubiquitin extension protein is synthesized as a single copy of ubiquitin fused to a ribosomal protein (either eL40 or eS31) or to a ubiquitin-related protein (either RUB1 or RUB2). Following translation, extension protein is cleaved from ubiquitin.</text>
</comment>
<comment type="miscellaneous">
    <text>For the sake of clarity sequence features are annotated only for the first chain, and are not repeated for each of the following chains.</text>
</comment>
<comment type="similarity">
    <text evidence="3">Belongs to the ubiquitin family.</text>
</comment>
<name>UBQ14_ARATH</name>